<dbReference type="EC" id="5.3.1.28" evidence="1"/>
<dbReference type="EMBL" id="CP001124">
    <property type="protein sequence ID" value="ACH39515.1"/>
    <property type="molecule type" value="Genomic_DNA"/>
</dbReference>
<dbReference type="RefSeq" id="WP_012530938.1">
    <property type="nucleotide sequence ID" value="NC_011146.1"/>
</dbReference>
<dbReference type="SMR" id="B5EGN2"/>
<dbReference type="STRING" id="404380.Gbem_2507"/>
<dbReference type="KEGG" id="gbm:Gbem_2507"/>
<dbReference type="eggNOG" id="COG0279">
    <property type="taxonomic scope" value="Bacteria"/>
</dbReference>
<dbReference type="HOGENOM" id="CLU_080999_4_0_7"/>
<dbReference type="OrthoDB" id="9810929at2"/>
<dbReference type="UniPathway" id="UPA00041">
    <property type="reaction ID" value="UER00436"/>
</dbReference>
<dbReference type="Proteomes" id="UP000008825">
    <property type="component" value="Chromosome"/>
</dbReference>
<dbReference type="GO" id="GO:0005737">
    <property type="term" value="C:cytoplasm"/>
    <property type="evidence" value="ECO:0007669"/>
    <property type="project" value="UniProtKB-SubCell"/>
</dbReference>
<dbReference type="GO" id="GO:0097367">
    <property type="term" value="F:carbohydrate derivative binding"/>
    <property type="evidence" value="ECO:0007669"/>
    <property type="project" value="InterPro"/>
</dbReference>
<dbReference type="GO" id="GO:0008968">
    <property type="term" value="F:D-sedoheptulose 7-phosphate isomerase activity"/>
    <property type="evidence" value="ECO:0007669"/>
    <property type="project" value="UniProtKB-UniRule"/>
</dbReference>
<dbReference type="GO" id="GO:0008270">
    <property type="term" value="F:zinc ion binding"/>
    <property type="evidence" value="ECO:0007669"/>
    <property type="project" value="UniProtKB-UniRule"/>
</dbReference>
<dbReference type="GO" id="GO:0005975">
    <property type="term" value="P:carbohydrate metabolic process"/>
    <property type="evidence" value="ECO:0007669"/>
    <property type="project" value="UniProtKB-UniRule"/>
</dbReference>
<dbReference type="GO" id="GO:2001061">
    <property type="term" value="P:D-glycero-D-manno-heptose 7-phosphate biosynthetic process"/>
    <property type="evidence" value="ECO:0007669"/>
    <property type="project" value="UniProtKB-UniPathway"/>
</dbReference>
<dbReference type="CDD" id="cd05006">
    <property type="entry name" value="SIS_GmhA"/>
    <property type="match status" value="1"/>
</dbReference>
<dbReference type="Gene3D" id="3.40.50.10490">
    <property type="entry name" value="Glucose-6-phosphate isomerase like protein, domain 1"/>
    <property type="match status" value="1"/>
</dbReference>
<dbReference type="HAMAP" id="MF_00067">
    <property type="entry name" value="GmhA"/>
    <property type="match status" value="1"/>
</dbReference>
<dbReference type="InterPro" id="IPR035461">
    <property type="entry name" value="GmhA/DiaA"/>
</dbReference>
<dbReference type="InterPro" id="IPR004515">
    <property type="entry name" value="Phosphoheptose_Isoase"/>
</dbReference>
<dbReference type="InterPro" id="IPR001347">
    <property type="entry name" value="SIS_dom"/>
</dbReference>
<dbReference type="InterPro" id="IPR046348">
    <property type="entry name" value="SIS_dom_sf"/>
</dbReference>
<dbReference type="InterPro" id="IPR050099">
    <property type="entry name" value="SIS_GmhA/DiaA_subfam"/>
</dbReference>
<dbReference type="NCBIfam" id="TIGR00441">
    <property type="entry name" value="gmhA"/>
    <property type="match status" value="1"/>
</dbReference>
<dbReference type="PANTHER" id="PTHR30390:SF6">
    <property type="entry name" value="DNAA INITIATOR-ASSOCIATING PROTEIN DIAA"/>
    <property type="match status" value="1"/>
</dbReference>
<dbReference type="PANTHER" id="PTHR30390">
    <property type="entry name" value="SEDOHEPTULOSE 7-PHOSPHATE ISOMERASE / DNAA INITIATOR-ASSOCIATING FACTOR FOR REPLICATION INITIATION"/>
    <property type="match status" value="1"/>
</dbReference>
<dbReference type="Pfam" id="PF13580">
    <property type="entry name" value="SIS_2"/>
    <property type="match status" value="1"/>
</dbReference>
<dbReference type="SUPFAM" id="SSF53697">
    <property type="entry name" value="SIS domain"/>
    <property type="match status" value="1"/>
</dbReference>
<dbReference type="PROSITE" id="PS51464">
    <property type="entry name" value="SIS"/>
    <property type="match status" value="1"/>
</dbReference>
<proteinExistence type="inferred from homology"/>
<reference key="1">
    <citation type="submission" date="2008-07" db="EMBL/GenBank/DDBJ databases">
        <title>Complete sequence of Geobacter bemidjiensis BEM.</title>
        <authorList>
            <consortium name="US DOE Joint Genome Institute"/>
            <person name="Lucas S."/>
            <person name="Copeland A."/>
            <person name="Lapidus A."/>
            <person name="Glavina del Rio T."/>
            <person name="Dalin E."/>
            <person name="Tice H."/>
            <person name="Bruce D."/>
            <person name="Goodwin L."/>
            <person name="Pitluck S."/>
            <person name="Kiss H."/>
            <person name="Brettin T."/>
            <person name="Detter J.C."/>
            <person name="Han C."/>
            <person name="Kuske C.R."/>
            <person name="Schmutz J."/>
            <person name="Larimer F."/>
            <person name="Land M."/>
            <person name="Hauser L."/>
            <person name="Kyrpides N."/>
            <person name="Lykidis A."/>
            <person name="Lovley D."/>
            <person name="Richardson P."/>
        </authorList>
    </citation>
    <scope>NUCLEOTIDE SEQUENCE [LARGE SCALE GENOMIC DNA]</scope>
    <source>
        <strain>ATCC BAA-1014 / DSM 16622 / JCM 12645 / Bem</strain>
    </source>
</reference>
<gene>
    <name evidence="1" type="primary">gmhA</name>
    <name type="ordered locus">Gbem_2507</name>
</gene>
<evidence type="ECO:0000255" key="1">
    <source>
        <dbReference type="HAMAP-Rule" id="MF_00067"/>
    </source>
</evidence>
<accession>B5EGN2</accession>
<name>GMHA_CITBB</name>
<keyword id="KW-0119">Carbohydrate metabolism</keyword>
<keyword id="KW-0963">Cytoplasm</keyword>
<keyword id="KW-0413">Isomerase</keyword>
<keyword id="KW-0479">Metal-binding</keyword>
<keyword id="KW-1185">Reference proteome</keyword>
<keyword id="KW-0862">Zinc</keyword>
<comment type="function">
    <text evidence="1">Catalyzes the isomerization of sedoheptulose 7-phosphate in D-glycero-D-manno-heptose 7-phosphate.</text>
</comment>
<comment type="catalytic activity">
    <reaction evidence="1">
        <text>2 D-sedoheptulose 7-phosphate = D-glycero-alpha-D-manno-heptose 7-phosphate + D-glycero-beta-D-manno-heptose 7-phosphate</text>
        <dbReference type="Rhea" id="RHEA:27489"/>
        <dbReference type="ChEBI" id="CHEBI:57483"/>
        <dbReference type="ChEBI" id="CHEBI:60203"/>
        <dbReference type="ChEBI" id="CHEBI:60204"/>
        <dbReference type="EC" id="5.3.1.28"/>
    </reaction>
</comment>
<comment type="cofactor">
    <cofactor evidence="1">
        <name>Zn(2+)</name>
        <dbReference type="ChEBI" id="CHEBI:29105"/>
    </cofactor>
    <text evidence="1">Binds 1 zinc ion per subunit.</text>
</comment>
<comment type="pathway">
    <text evidence="1">Carbohydrate biosynthesis; D-glycero-D-manno-heptose 7-phosphate biosynthesis; D-glycero-alpha-D-manno-heptose 7-phosphate and D-glycero-beta-D-manno-heptose 7-phosphate from sedoheptulose 7-phosphate: step 1/1.</text>
</comment>
<comment type="subunit">
    <text evidence="1">Homotetramer.</text>
</comment>
<comment type="subcellular location">
    <subcellularLocation>
        <location evidence="1">Cytoplasm</location>
    </subcellularLocation>
</comment>
<comment type="miscellaneous">
    <text evidence="1">The reaction produces a racemic mixture of D-glycero-alpha-D-manno-heptose 7-phosphate and D-glycero-beta-D-manno-heptose 7-phosphate.</text>
</comment>
<comment type="similarity">
    <text evidence="1">Belongs to the SIS family. GmhA subfamily.</text>
</comment>
<feature type="chain" id="PRO_1000092274" description="Phosphoheptose isomerase">
    <location>
        <begin position="1"/>
        <end position="192"/>
    </location>
</feature>
<feature type="domain" description="SIS" evidence="1">
    <location>
        <begin position="34"/>
        <end position="192"/>
    </location>
</feature>
<feature type="binding site" evidence="1">
    <location>
        <begin position="49"/>
        <end position="51"/>
    </location>
    <ligand>
        <name>substrate</name>
    </ligand>
</feature>
<feature type="binding site" evidence="1">
    <location>
        <position position="58"/>
    </location>
    <ligand>
        <name>Zn(2+)</name>
        <dbReference type="ChEBI" id="CHEBI:29105"/>
    </ligand>
</feature>
<feature type="binding site" evidence="1">
    <location>
        <position position="62"/>
    </location>
    <ligand>
        <name>substrate</name>
    </ligand>
</feature>
<feature type="binding site" evidence="1">
    <location>
        <position position="62"/>
    </location>
    <ligand>
        <name>Zn(2+)</name>
        <dbReference type="ChEBI" id="CHEBI:29105"/>
    </ligand>
</feature>
<feature type="binding site" evidence="1">
    <location>
        <begin position="91"/>
        <end position="92"/>
    </location>
    <ligand>
        <name>substrate</name>
    </ligand>
</feature>
<feature type="binding site" evidence="1">
    <location>
        <begin position="117"/>
        <end position="119"/>
    </location>
    <ligand>
        <name>substrate</name>
    </ligand>
</feature>
<feature type="binding site" evidence="1">
    <location>
        <position position="122"/>
    </location>
    <ligand>
        <name>substrate</name>
    </ligand>
</feature>
<feature type="binding site" evidence="1">
    <location>
        <position position="169"/>
    </location>
    <ligand>
        <name>substrate</name>
    </ligand>
</feature>
<feature type="binding site" evidence="1">
    <location>
        <position position="169"/>
    </location>
    <ligand>
        <name>Zn(2+)</name>
        <dbReference type="ChEBI" id="CHEBI:29105"/>
    </ligand>
</feature>
<feature type="binding site" evidence="1">
    <location>
        <position position="177"/>
    </location>
    <ligand>
        <name>Zn(2+)</name>
        <dbReference type="ChEBI" id="CHEBI:29105"/>
    </ligand>
</feature>
<protein>
    <recommendedName>
        <fullName evidence="1">Phosphoheptose isomerase</fullName>
        <ecNumber evidence="1">5.3.1.28</ecNumber>
    </recommendedName>
    <alternativeName>
        <fullName evidence="1">Sedoheptulose 7-phosphate isomerase</fullName>
    </alternativeName>
</protein>
<sequence>MLVEIKAQLKAHCEVMTALQGELSPAIESAVSLVVDAYKAGNKLLVMGNGGSAADAQHFVAEMVGRFKLERRALPAIALHTDTSILTAIGNDYGFDRIFSRQVEAHAAAGDVVVGISTSGNSPNVQLALELAREKGCRTIALLGKDGGSIKSVAELPLIVPSNDTPRIQEGHITIIHIICDLVERELFVKGK</sequence>
<organism>
    <name type="scientific">Citrifermentans bemidjiense (strain ATCC BAA-1014 / DSM 16622 / JCM 12645 / Bem)</name>
    <name type="common">Geobacter bemidjiensis</name>
    <dbReference type="NCBI Taxonomy" id="404380"/>
    <lineage>
        <taxon>Bacteria</taxon>
        <taxon>Pseudomonadati</taxon>
        <taxon>Thermodesulfobacteriota</taxon>
        <taxon>Desulfuromonadia</taxon>
        <taxon>Geobacterales</taxon>
        <taxon>Geobacteraceae</taxon>
        <taxon>Citrifermentans</taxon>
    </lineage>
</organism>